<gene>
    <name evidence="1" type="primary">trpC</name>
    <name type="ordered locus">Tery_3169</name>
</gene>
<comment type="catalytic activity">
    <reaction evidence="1">
        <text>1-(2-carboxyphenylamino)-1-deoxy-D-ribulose 5-phosphate + H(+) = (1S,2R)-1-C-(indol-3-yl)glycerol 3-phosphate + CO2 + H2O</text>
        <dbReference type="Rhea" id="RHEA:23476"/>
        <dbReference type="ChEBI" id="CHEBI:15377"/>
        <dbReference type="ChEBI" id="CHEBI:15378"/>
        <dbReference type="ChEBI" id="CHEBI:16526"/>
        <dbReference type="ChEBI" id="CHEBI:58613"/>
        <dbReference type="ChEBI" id="CHEBI:58866"/>
        <dbReference type="EC" id="4.1.1.48"/>
    </reaction>
</comment>
<comment type="pathway">
    <text evidence="1">Amino-acid biosynthesis; L-tryptophan biosynthesis; L-tryptophan from chorismate: step 4/5.</text>
</comment>
<comment type="similarity">
    <text evidence="1">Belongs to the TrpC family.</text>
</comment>
<proteinExistence type="inferred from homology"/>
<name>TRPC_TRIEI</name>
<reference key="1">
    <citation type="journal article" date="2015" name="Proc. Natl. Acad. Sci. U.S.A.">
        <title>Trichodesmium genome maintains abundant, widespread noncoding DNA in situ, despite oligotrophic lifestyle.</title>
        <authorList>
            <person name="Walworth N."/>
            <person name="Pfreundt U."/>
            <person name="Nelson W.C."/>
            <person name="Mincer T."/>
            <person name="Heidelberg J.F."/>
            <person name="Fu F."/>
            <person name="Waterbury J.B."/>
            <person name="Glavina del Rio T."/>
            <person name="Goodwin L."/>
            <person name="Kyrpides N.C."/>
            <person name="Land M.L."/>
            <person name="Woyke T."/>
            <person name="Hutchins D.A."/>
            <person name="Hess W.R."/>
            <person name="Webb E.A."/>
        </authorList>
    </citation>
    <scope>NUCLEOTIDE SEQUENCE [LARGE SCALE GENOMIC DNA]</scope>
    <source>
        <strain>IMS101</strain>
    </source>
</reference>
<sequence length="297" mass="33521">MQIRRRPPNPAVEMGTLRYEVSVPESKPKNILEEIVWHKEKEVDYLRDKEPLVELRKKINLMPPPLDFLTTLSTGKTQLAVIAEVKKASPSKGVIRQDFEPVAIAKLYQENAATCISVLTDRKFFQGSFENLANIRENVDLPLLCKDFLIYPYQIYFARLYGADAVLLIAAILSDQDLKYFIKIVNSLGMTALVEVHTLKELDRVLGIEGVKLIGINNRNLEDFSVDLQTTFQLMEARKKELEKLGILVVSESGIHSYEDINFMINAGVNAVLVGESLVKKTNPGTALLQLFNENKS</sequence>
<organism>
    <name type="scientific">Trichodesmium erythraeum (strain IMS101)</name>
    <dbReference type="NCBI Taxonomy" id="203124"/>
    <lineage>
        <taxon>Bacteria</taxon>
        <taxon>Bacillati</taxon>
        <taxon>Cyanobacteriota</taxon>
        <taxon>Cyanophyceae</taxon>
        <taxon>Oscillatoriophycideae</taxon>
        <taxon>Oscillatoriales</taxon>
        <taxon>Microcoleaceae</taxon>
        <taxon>Trichodesmium</taxon>
    </lineage>
</organism>
<dbReference type="EC" id="4.1.1.48" evidence="1"/>
<dbReference type="EMBL" id="CP000393">
    <property type="protein sequence ID" value="ABG52297.1"/>
    <property type="molecule type" value="Genomic_DNA"/>
</dbReference>
<dbReference type="RefSeq" id="WP_011612644.1">
    <property type="nucleotide sequence ID" value="NC_008312.1"/>
</dbReference>
<dbReference type="SMR" id="Q10ZM7"/>
<dbReference type="STRING" id="203124.Tery_3169"/>
<dbReference type="KEGG" id="ter:Tery_3169"/>
<dbReference type="eggNOG" id="COG0134">
    <property type="taxonomic scope" value="Bacteria"/>
</dbReference>
<dbReference type="HOGENOM" id="CLU_034247_1_0_3"/>
<dbReference type="OrthoDB" id="9804217at2"/>
<dbReference type="UniPathway" id="UPA00035">
    <property type="reaction ID" value="UER00043"/>
</dbReference>
<dbReference type="GO" id="GO:0004425">
    <property type="term" value="F:indole-3-glycerol-phosphate synthase activity"/>
    <property type="evidence" value="ECO:0007669"/>
    <property type="project" value="UniProtKB-UniRule"/>
</dbReference>
<dbReference type="GO" id="GO:0004640">
    <property type="term" value="F:phosphoribosylanthranilate isomerase activity"/>
    <property type="evidence" value="ECO:0007669"/>
    <property type="project" value="TreeGrafter"/>
</dbReference>
<dbReference type="GO" id="GO:0000162">
    <property type="term" value="P:L-tryptophan biosynthetic process"/>
    <property type="evidence" value="ECO:0007669"/>
    <property type="project" value="UniProtKB-UniRule"/>
</dbReference>
<dbReference type="CDD" id="cd00331">
    <property type="entry name" value="IGPS"/>
    <property type="match status" value="1"/>
</dbReference>
<dbReference type="FunFam" id="3.20.20.70:FF:000024">
    <property type="entry name" value="Indole-3-glycerol phosphate synthase"/>
    <property type="match status" value="1"/>
</dbReference>
<dbReference type="Gene3D" id="3.20.20.70">
    <property type="entry name" value="Aldolase class I"/>
    <property type="match status" value="1"/>
</dbReference>
<dbReference type="HAMAP" id="MF_00134_B">
    <property type="entry name" value="IGPS_B"/>
    <property type="match status" value="1"/>
</dbReference>
<dbReference type="InterPro" id="IPR013785">
    <property type="entry name" value="Aldolase_TIM"/>
</dbReference>
<dbReference type="InterPro" id="IPR045186">
    <property type="entry name" value="Indole-3-glycerol_P_synth"/>
</dbReference>
<dbReference type="InterPro" id="IPR013798">
    <property type="entry name" value="Indole-3-glycerol_P_synth_dom"/>
</dbReference>
<dbReference type="InterPro" id="IPR001468">
    <property type="entry name" value="Indole-3-GlycerolPSynthase_CS"/>
</dbReference>
<dbReference type="InterPro" id="IPR011060">
    <property type="entry name" value="RibuloseP-bd_barrel"/>
</dbReference>
<dbReference type="NCBIfam" id="NF001372">
    <property type="entry name" value="PRK00278.1-4"/>
    <property type="match status" value="1"/>
</dbReference>
<dbReference type="NCBIfam" id="NF001377">
    <property type="entry name" value="PRK00278.2-4"/>
    <property type="match status" value="1"/>
</dbReference>
<dbReference type="PANTHER" id="PTHR22854:SF2">
    <property type="entry name" value="INDOLE-3-GLYCEROL-PHOSPHATE SYNTHASE"/>
    <property type="match status" value="1"/>
</dbReference>
<dbReference type="PANTHER" id="PTHR22854">
    <property type="entry name" value="TRYPTOPHAN BIOSYNTHESIS PROTEIN"/>
    <property type="match status" value="1"/>
</dbReference>
<dbReference type="Pfam" id="PF00218">
    <property type="entry name" value="IGPS"/>
    <property type="match status" value="1"/>
</dbReference>
<dbReference type="SUPFAM" id="SSF51366">
    <property type="entry name" value="Ribulose-phoshate binding barrel"/>
    <property type="match status" value="1"/>
</dbReference>
<dbReference type="PROSITE" id="PS00614">
    <property type="entry name" value="IGPS"/>
    <property type="match status" value="1"/>
</dbReference>
<accession>Q10ZM7</accession>
<feature type="chain" id="PRO_1000018568" description="Indole-3-glycerol phosphate synthase">
    <location>
        <begin position="1"/>
        <end position="297"/>
    </location>
</feature>
<protein>
    <recommendedName>
        <fullName evidence="1">Indole-3-glycerol phosphate synthase</fullName>
        <shortName evidence="1">IGPS</shortName>
        <ecNumber evidence="1">4.1.1.48</ecNumber>
    </recommendedName>
</protein>
<keyword id="KW-0028">Amino-acid biosynthesis</keyword>
<keyword id="KW-0057">Aromatic amino acid biosynthesis</keyword>
<keyword id="KW-0210">Decarboxylase</keyword>
<keyword id="KW-0456">Lyase</keyword>
<keyword id="KW-0822">Tryptophan biosynthesis</keyword>
<evidence type="ECO:0000255" key="1">
    <source>
        <dbReference type="HAMAP-Rule" id="MF_00134"/>
    </source>
</evidence>